<sequence>MKSIGLNLSGREYKILIGSDLLSETATLLREAIPCDRVVVITNIDINRIYGKKLKKHLESKGIESLFLELPEGEIHKTLDMAAHIYPQLINHFAERNTPILALGGGVIGDLSGFVAATYQRGVPLIHLPTSLLSQVDSSIGGKVAVNHGGVKNIVGSFYQPRLVIADTGCLKTLPEKEFACGMAEIIKSAAIGSSELFRMLETNTQAVKDRSPEVMEDIISQTAAIKAGIVCQDETDRGIRNILNFGHTLGHALESTSSFSQSHGAAVAIGMCFAARLSVRLGLCENETALRLEKLIADFGLPTNPKDIDPDKIIEAMHHDKKVSDGRIRFILLKRPGEALIAENILKPDVLSVLEEMK</sequence>
<name>AROB_DEHMB</name>
<proteinExistence type="inferred from homology"/>
<keyword id="KW-0028">Amino-acid biosynthesis</keyword>
<keyword id="KW-0057">Aromatic amino acid biosynthesis</keyword>
<keyword id="KW-0170">Cobalt</keyword>
<keyword id="KW-0963">Cytoplasm</keyword>
<keyword id="KW-0456">Lyase</keyword>
<keyword id="KW-0479">Metal-binding</keyword>
<keyword id="KW-0520">NAD</keyword>
<keyword id="KW-0547">Nucleotide-binding</keyword>
<keyword id="KW-0862">Zinc</keyword>
<comment type="function">
    <text evidence="1">Catalyzes the conversion of 3-deoxy-D-arabino-heptulosonate 7-phosphate (DAHP) to dehydroquinate (DHQ).</text>
</comment>
<comment type="catalytic activity">
    <reaction evidence="1">
        <text>7-phospho-2-dehydro-3-deoxy-D-arabino-heptonate = 3-dehydroquinate + phosphate</text>
        <dbReference type="Rhea" id="RHEA:21968"/>
        <dbReference type="ChEBI" id="CHEBI:32364"/>
        <dbReference type="ChEBI" id="CHEBI:43474"/>
        <dbReference type="ChEBI" id="CHEBI:58394"/>
        <dbReference type="EC" id="4.2.3.4"/>
    </reaction>
</comment>
<comment type="cofactor">
    <cofactor evidence="1">
        <name>Co(2+)</name>
        <dbReference type="ChEBI" id="CHEBI:48828"/>
    </cofactor>
    <cofactor evidence="1">
        <name>Zn(2+)</name>
        <dbReference type="ChEBI" id="CHEBI:29105"/>
    </cofactor>
    <text evidence="1">Binds 1 divalent metal cation per subunit. Can use either Co(2+) or Zn(2+).</text>
</comment>
<comment type="cofactor">
    <cofactor evidence="1">
        <name>NAD(+)</name>
        <dbReference type="ChEBI" id="CHEBI:57540"/>
    </cofactor>
</comment>
<comment type="pathway">
    <text evidence="1">Metabolic intermediate biosynthesis; chorismate biosynthesis; chorismate from D-erythrose 4-phosphate and phosphoenolpyruvate: step 2/7.</text>
</comment>
<comment type="subcellular location">
    <subcellularLocation>
        <location evidence="1">Cytoplasm</location>
    </subcellularLocation>
</comment>
<comment type="similarity">
    <text evidence="1">Belongs to the sugar phosphate cyclases superfamily. Dehydroquinate synthase family.</text>
</comment>
<evidence type="ECO:0000255" key="1">
    <source>
        <dbReference type="HAMAP-Rule" id="MF_00110"/>
    </source>
</evidence>
<dbReference type="EC" id="4.2.3.4" evidence="1"/>
<dbReference type="EMBL" id="CP000688">
    <property type="protein sequence ID" value="ABQ17029.1"/>
    <property type="molecule type" value="Genomic_DNA"/>
</dbReference>
<dbReference type="SMR" id="A5FRZ7"/>
<dbReference type="KEGG" id="deb:DehaBAV1_0444"/>
<dbReference type="PATRIC" id="fig|216389.18.peg.487"/>
<dbReference type="HOGENOM" id="CLU_001201_0_2_0"/>
<dbReference type="UniPathway" id="UPA00053">
    <property type="reaction ID" value="UER00085"/>
</dbReference>
<dbReference type="GO" id="GO:0005737">
    <property type="term" value="C:cytoplasm"/>
    <property type="evidence" value="ECO:0007669"/>
    <property type="project" value="UniProtKB-SubCell"/>
</dbReference>
<dbReference type="GO" id="GO:0003856">
    <property type="term" value="F:3-dehydroquinate synthase activity"/>
    <property type="evidence" value="ECO:0007669"/>
    <property type="project" value="UniProtKB-UniRule"/>
</dbReference>
<dbReference type="GO" id="GO:0046872">
    <property type="term" value="F:metal ion binding"/>
    <property type="evidence" value="ECO:0007669"/>
    <property type="project" value="UniProtKB-KW"/>
</dbReference>
<dbReference type="GO" id="GO:0000166">
    <property type="term" value="F:nucleotide binding"/>
    <property type="evidence" value="ECO:0007669"/>
    <property type="project" value="UniProtKB-KW"/>
</dbReference>
<dbReference type="GO" id="GO:0008652">
    <property type="term" value="P:amino acid biosynthetic process"/>
    <property type="evidence" value="ECO:0007669"/>
    <property type="project" value="UniProtKB-KW"/>
</dbReference>
<dbReference type="GO" id="GO:0009073">
    <property type="term" value="P:aromatic amino acid family biosynthetic process"/>
    <property type="evidence" value="ECO:0007669"/>
    <property type="project" value="UniProtKB-KW"/>
</dbReference>
<dbReference type="GO" id="GO:0009423">
    <property type="term" value="P:chorismate biosynthetic process"/>
    <property type="evidence" value="ECO:0007669"/>
    <property type="project" value="UniProtKB-UniRule"/>
</dbReference>
<dbReference type="CDD" id="cd08195">
    <property type="entry name" value="DHQS"/>
    <property type="match status" value="1"/>
</dbReference>
<dbReference type="FunFam" id="3.40.50.1970:FF:000007">
    <property type="entry name" value="Pentafunctional AROM polypeptide"/>
    <property type="match status" value="1"/>
</dbReference>
<dbReference type="Gene3D" id="3.40.50.1970">
    <property type="match status" value="1"/>
</dbReference>
<dbReference type="Gene3D" id="1.20.1090.10">
    <property type="entry name" value="Dehydroquinate synthase-like - alpha domain"/>
    <property type="match status" value="1"/>
</dbReference>
<dbReference type="HAMAP" id="MF_00110">
    <property type="entry name" value="DHQ_synthase"/>
    <property type="match status" value="1"/>
</dbReference>
<dbReference type="InterPro" id="IPR050071">
    <property type="entry name" value="Dehydroquinate_synthase"/>
</dbReference>
<dbReference type="InterPro" id="IPR016037">
    <property type="entry name" value="DHQ_synth_AroB"/>
</dbReference>
<dbReference type="InterPro" id="IPR030963">
    <property type="entry name" value="DHQ_synth_fam"/>
</dbReference>
<dbReference type="InterPro" id="IPR030960">
    <property type="entry name" value="DHQS/DOIS_N"/>
</dbReference>
<dbReference type="InterPro" id="IPR056179">
    <property type="entry name" value="DHQS_C"/>
</dbReference>
<dbReference type="NCBIfam" id="TIGR01357">
    <property type="entry name" value="aroB"/>
    <property type="match status" value="1"/>
</dbReference>
<dbReference type="PANTHER" id="PTHR43622">
    <property type="entry name" value="3-DEHYDROQUINATE SYNTHASE"/>
    <property type="match status" value="1"/>
</dbReference>
<dbReference type="PANTHER" id="PTHR43622:SF7">
    <property type="entry name" value="3-DEHYDROQUINATE SYNTHASE, CHLOROPLASTIC"/>
    <property type="match status" value="1"/>
</dbReference>
<dbReference type="Pfam" id="PF01761">
    <property type="entry name" value="DHQ_synthase"/>
    <property type="match status" value="1"/>
</dbReference>
<dbReference type="Pfam" id="PF24621">
    <property type="entry name" value="DHQS_C"/>
    <property type="match status" value="1"/>
</dbReference>
<dbReference type="PIRSF" id="PIRSF001455">
    <property type="entry name" value="DHQ_synth"/>
    <property type="match status" value="1"/>
</dbReference>
<dbReference type="SUPFAM" id="SSF56796">
    <property type="entry name" value="Dehydroquinate synthase-like"/>
    <property type="match status" value="1"/>
</dbReference>
<accession>A5FRZ7</accession>
<feature type="chain" id="PRO_1000094502" description="3-dehydroquinate synthase">
    <location>
        <begin position="1"/>
        <end position="359"/>
    </location>
</feature>
<feature type="binding site" evidence="1">
    <location>
        <begin position="72"/>
        <end position="77"/>
    </location>
    <ligand>
        <name>NAD(+)</name>
        <dbReference type="ChEBI" id="CHEBI:57540"/>
    </ligand>
</feature>
<feature type="binding site" evidence="1">
    <location>
        <begin position="106"/>
        <end position="110"/>
    </location>
    <ligand>
        <name>NAD(+)</name>
        <dbReference type="ChEBI" id="CHEBI:57540"/>
    </ligand>
</feature>
<feature type="binding site" evidence="1">
    <location>
        <begin position="130"/>
        <end position="131"/>
    </location>
    <ligand>
        <name>NAD(+)</name>
        <dbReference type="ChEBI" id="CHEBI:57540"/>
    </ligand>
</feature>
<feature type="binding site" evidence="1">
    <location>
        <position position="143"/>
    </location>
    <ligand>
        <name>NAD(+)</name>
        <dbReference type="ChEBI" id="CHEBI:57540"/>
    </ligand>
</feature>
<feature type="binding site" evidence="1">
    <location>
        <position position="152"/>
    </location>
    <ligand>
        <name>NAD(+)</name>
        <dbReference type="ChEBI" id="CHEBI:57540"/>
    </ligand>
</feature>
<feature type="binding site" evidence="1">
    <location>
        <begin position="170"/>
        <end position="173"/>
    </location>
    <ligand>
        <name>NAD(+)</name>
        <dbReference type="ChEBI" id="CHEBI:57540"/>
    </ligand>
</feature>
<feature type="binding site" evidence="1">
    <location>
        <position position="185"/>
    </location>
    <ligand>
        <name>Zn(2+)</name>
        <dbReference type="ChEBI" id="CHEBI:29105"/>
    </ligand>
</feature>
<feature type="binding site" evidence="1">
    <location>
        <position position="248"/>
    </location>
    <ligand>
        <name>Zn(2+)</name>
        <dbReference type="ChEBI" id="CHEBI:29105"/>
    </ligand>
</feature>
<feature type="binding site" evidence="1">
    <location>
        <position position="264"/>
    </location>
    <ligand>
        <name>Zn(2+)</name>
        <dbReference type="ChEBI" id="CHEBI:29105"/>
    </ligand>
</feature>
<gene>
    <name evidence="1" type="primary">aroB</name>
    <name type="ordered locus">DehaBAV1_0444</name>
</gene>
<organism>
    <name type="scientific">Dehalococcoides mccartyi (strain ATCC BAA-2100 / JCM 16839 / KCTC 5957 / BAV1)</name>
    <dbReference type="NCBI Taxonomy" id="216389"/>
    <lineage>
        <taxon>Bacteria</taxon>
        <taxon>Bacillati</taxon>
        <taxon>Chloroflexota</taxon>
        <taxon>Dehalococcoidia</taxon>
        <taxon>Dehalococcoidales</taxon>
        <taxon>Dehalococcoidaceae</taxon>
        <taxon>Dehalococcoides</taxon>
    </lineage>
</organism>
<protein>
    <recommendedName>
        <fullName evidence="1">3-dehydroquinate synthase</fullName>
        <shortName evidence="1">DHQS</shortName>
        <ecNumber evidence="1">4.2.3.4</ecNumber>
    </recommendedName>
</protein>
<reference key="1">
    <citation type="submission" date="2007-05" db="EMBL/GenBank/DDBJ databases">
        <title>Complete sequence of Dehalococcoides sp. BAV1.</title>
        <authorList>
            <consortium name="US DOE Joint Genome Institute"/>
            <person name="Copeland A."/>
            <person name="Lucas S."/>
            <person name="Lapidus A."/>
            <person name="Barry K."/>
            <person name="Detter J.C."/>
            <person name="Glavina del Rio T."/>
            <person name="Hammon N."/>
            <person name="Israni S."/>
            <person name="Pitluck S."/>
            <person name="Lowry S."/>
            <person name="Clum A."/>
            <person name="Schmutz J."/>
            <person name="Larimer F."/>
            <person name="Land M."/>
            <person name="Hauser L."/>
            <person name="Kyrpides N."/>
            <person name="Kim E."/>
            <person name="Ritalahti K.M."/>
            <person name="Loeffler F."/>
            <person name="Richardson P."/>
        </authorList>
    </citation>
    <scope>NUCLEOTIDE SEQUENCE [LARGE SCALE GENOMIC DNA]</scope>
    <source>
        <strain>ATCC BAA-2100 / JCM 16839 / KCTC 5957 / BAV1</strain>
    </source>
</reference>